<accession>Q9TYV5</accession>
<accession>A0A0M7RDQ9</accession>
<evidence type="ECO:0000255" key="1">
    <source>
        <dbReference type="PROSITE-ProRule" id="PRU01023"/>
    </source>
</evidence>
<evidence type="ECO:0000256" key="2">
    <source>
        <dbReference type="SAM" id="MobiDB-lite"/>
    </source>
</evidence>
<evidence type="ECO:0000269" key="3">
    <source>
    </source>
</evidence>
<evidence type="ECO:0000269" key="4">
    <source>
    </source>
</evidence>
<evidence type="ECO:0000305" key="5"/>
<evidence type="ECO:0000305" key="6">
    <source>
    </source>
</evidence>
<evidence type="ECO:0000312" key="7">
    <source>
        <dbReference type="Proteomes" id="UP000001940"/>
    </source>
</evidence>
<evidence type="ECO:0000312" key="8">
    <source>
        <dbReference type="WormBase" id="W07E6.1a"/>
    </source>
</evidence>
<evidence type="ECO:0000312" key="9">
    <source>
        <dbReference type="WormBase" id="W07E6.1b"/>
    </source>
</evidence>
<protein>
    <recommendedName>
        <fullName evidence="5">26S rRNA (cytosine-C(5))-methyltransferase nsun-1</fullName>
        <ecNumber evidence="1 3 4">2.1.1.-</ecNumber>
    </recommendedName>
    <alternativeName>
        <fullName evidence="5">5-methylcytosine rRNA methyltransferase nsun-1</fullName>
    </alternativeName>
    <alternativeName>
        <fullName evidence="8">NOL1/NOP2/Sun domain family member 1</fullName>
    </alternativeName>
    <alternativeName>
        <fullName evidence="5">RNA cytosine C(5)-methyltransferase nsun-1</fullName>
    </alternativeName>
    <alternativeName>
        <fullName evidence="5">rRNA cytosine C(5)-methyltransferase nsun-1</fullName>
    </alternativeName>
</protein>
<feature type="chain" id="PRO_0000452476" description="26S rRNA (cytosine-C(5))-methyltransferase nsun-1">
    <location>
        <begin position="1"/>
        <end position="664"/>
    </location>
</feature>
<feature type="region of interest" description="Disordered" evidence="2">
    <location>
        <begin position="1"/>
        <end position="105"/>
    </location>
</feature>
<feature type="region of interest" description="Disordered" evidence="2">
    <location>
        <begin position="513"/>
        <end position="664"/>
    </location>
</feature>
<feature type="compositionally biased region" description="Basic residues" evidence="2">
    <location>
        <begin position="38"/>
        <end position="52"/>
    </location>
</feature>
<feature type="compositionally biased region" description="Basic and acidic residues" evidence="2">
    <location>
        <begin position="53"/>
        <end position="68"/>
    </location>
</feature>
<feature type="compositionally biased region" description="Acidic residues" evidence="2">
    <location>
        <begin position="84"/>
        <end position="99"/>
    </location>
</feature>
<feature type="compositionally biased region" description="Basic and acidic residues" evidence="2">
    <location>
        <begin position="519"/>
        <end position="528"/>
    </location>
</feature>
<feature type="compositionally biased region" description="Acidic residues" evidence="2">
    <location>
        <begin position="541"/>
        <end position="550"/>
    </location>
</feature>
<feature type="compositionally biased region" description="Basic residues" evidence="2">
    <location>
        <begin position="563"/>
        <end position="572"/>
    </location>
</feature>
<feature type="compositionally biased region" description="Basic and acidic residues" evidence="2">
    <location>
        <begin position="606"/>
        <end position="618"/>
    </location>
</feature>
<feature type="compositionally biased region" description="Basic residues" evidence="2">
    <location>
        <begin position="627"/>
        <end position="644"/>
    </location>
</feature>
<feature type="compositionally biased region" description="Basic residues" evidence="2">
    <location>
        <begin position="652"/>
        <end position="664"/>
    </location>
</feature>
<feature type="active site" description="Nucleophile" evidence="1">
    <location>
        <position position="439"/>
    </location>
</feature>
<feature type="binding site" evidence="1">
    <location>
        <begin position="313"/>
        <end position="319"/>
    </location>
    <ligand>
        <name>S-adenosyl-L-methionine</name>
        <dbReference type="ChEBI" id="CHEBI:59789"/>
    </ligand>
</feature>
<feature type="binding site" evidence="1">
    <location>
        <position position="337"/>
    </location>
    <ligand>
        <name>S-adenosyl-L-methionine</name>
        <dbReference type="ChEBI" id="CHEBI:59789"/>
    </ligand>
</feature>
<feature type="binding site" evidence="1">
    <location>
        <position position="382"/>
    </location>
    <ligand>
        <name>S-adenosyl-L-methionine</name>
        <dbReference type="ChEBI" id="CHEBI:59789"/>
    </ligand>
</feature>
<feature type="splice variant" id="VSP_061010" description="In isoform b." evidence="5">
    <location>
        <begin position="1"/>
        <end position="253"/>
    </location>
</feature>
<feature type="mutagenesis site" description="In mj437; viable and produce viable progeny. Reduces body length. Increases the reduction in body length, and at 25 degrees Celsius there is a reduced number of progeny in a nsun-4 (mj457), nsun-2 (mj458) and nsun-5 (tm3898) mutant background. Abolishes methylation of carbon-5 cysteines and its metabolic derivative 2'-O-methyl-5-hydroxymethylcytosine in RNA in a nsun-4 (mj457), nsun-2 (mj458) and nsun-5 (tm3898) mutant background." evidence="3">
    <original>C</original>
    <variation>A</variation>
    <location>
        <position position="439"/>
    </location>
</feature>
<comment type="function">
    <text evidence="3 4 6">Methyltransferase which methylates the carbon-5 position of cytosine 2982 to 5-methylcytosine (m5C2982) in 26S rRNA (PubMed:33283887, PubMed:33289480). May play a role in the translation of leucine and proline codons (Probable). May be required for the translation of specific mRNAs such as mRNAs involved in gonad development, collagen production and cuticle integrity (PubMed:33289480). Plays a role in ensuring the correct localization of the germline-specific protein gld-1 during development (PubMed:33289480). Not required for pre-rRNA processing, the production of mature 5S, 5.8S, 18S or 26S rRNAs or global translation (PubMed:33289480). Plays a role in positively regulating fertility (PubMed:33283887).</text>
</comment>
<comment type="catalytic activity">
    <reaction evidence="3 4">
        <text>a cytidine in 26S rRNA + S-adenosyl-L-methionine = a 5-methylcytidine in 26S rRNA + S-adenosyl-L-homocysteine + H(+)</text>
        <dbReference type="Rhea" id="RHEA:66588"/>
        <dbReference type="Rhea" id="RHEA-COMP:17065"/>
        <dbReference type="Rhea" id="RHEA-COMP:17066"/>
        <dbReference type="ChEBI" id="CHEBI:15378"/>
        <dbReference type="ChEBI" id="CHEBI:57856"/>
        <dbReference type="ChEBI" id="CHEBI:59789"/>
        <dbReference type="ChEBI" id="CHEBI:74483"/>
        <dbReference type="ChEBI" id="CHEBI:82748"/>
    </reaction>
</comment>
<comment type="subcellular location">
    <subcellularLocation>
        <location evidence="5">Nucleus</location>
        <location evidence="5">Nucleolus</location>
    </subcellularLocation>
</comment>
<comment type="alternative products">
    <event type="alternative splicing"/>
    <isoform>
        <id>Q9TYV5-1</id>
        <name evidence="8">a</name>
        <sequence type="displayed"/>
    </isoform>
    <isoform>
        <id>Q9TYV5-2</id>
        <name evidence="9">b</name>
        <sequence type="described" ref="VSP_061010"/>
    </isoform>
</comment>
<comment type="developmental stage">
    <text evidence="4">Expression increases during the larval stages to adulthood.</text>
</comment>
<comment type="disruption phenotype">
    <text evidence="3 4">RNAi-mediated knockdown in L1 larvae results in sterility (PubMed:33283887). RNAi-mediated knockdown in adults results in reduced egg-laying (PubMed:33289480). RNAi-mediated knockdown from day 0 of adulthood or in the germline does not affect lifespan (PubMed:33289480). RNAi-mediated knockdown in somatic tissues reduces lifespan by 10% and reduces body length and results in morphological defects in the gonad leading to the production of no oocytes (PubMed:33289480). RNAi-mediated knockdown increases resistance to heat stress and increases the speed of locomotion (PubMed:33289480). RNAi-mediated knockdown disrupts the localization of the germline-specific protein gld-1, results in collagen deposition and increases cuticle permeability (PubMed:33289480). RNAi-mediated knockdown reduces the methylation of cytosine to 5-methylcytosine (m5C) in 26S rRNA (PubMed:33289480). RNAi-mediated knockdown does not affect the methylation of cytosine 2381 to 5-methylcytosine (m5C2381) in 26S rRNA (PubMed:33289480).</text>
</comment>
<comment type="similarity">
    <text evidence="1">Belongs to the class I-like SAM-binding methyltransferase superfamily. RsmB/NOP family.</text>
</comment>
<sequence>MAIVKKKKVSAASKAATEKPEVKKAVKRPVAETEAVTPKKKKLVKKVKKSAKKAHEEEPIEQVEKLQLIDDDEDGLEGLSFPGSDDEDLRDDYSDDDSDAGDHLPIEKKSAALDKQKEKIIAEGEEELQLNIANQATFELPTVEEIENEMKSVPNLEIVKQRIADVIQVLGDFKNRRDPQKSRENYVEVLKKDLCSQYGYNDYLMGKFMDLFPNGAELLEFLEANDNPRPVTIRANSLKVKRRDLAKNLINRGMNVDPAADWTKVGLVVYDSQVPVGATPEYLAGHYMIQGLNSLLPVMALAPQPGDRVLDMCSAPGGKTSHIAALMKNSGVLFANDANFTRCRAIIGNLHRLGVNNTVVCNLGGEEFSKIRPNGFDRILLDAPCSGTGVIWKDQSVKTSKDSQDVQRRHTMQRQLILSALDSLDANSPNGGYLVYSTCSVLVEENEAVVNFLLERRHCELVPTGLSIGVDGYTRFRDYRFHPSLSMTKRYYPHVHNIDGFYVAKIKKLSNAKMSKQGVMEKEKEKAAQKSQNKKNKAEAEASESSDDEEEKKNGVEVNGQKKPAKKQQQKKQKADGDDSDDDNNAPMKNIGSGARANKKRRNQKKAAEKQAAVKEDDGFNTVGNVKRAKKPTQFKSKVPKRAAARTGAKSVKNRRKKMLAKQQ</sequence>
<organism evidence="7">
    <name type="scientific">Caenorhabditis elegans</name>
    <dbReference type="NCBI Taxonomy" id="6239"/>
    <lineage>
        <taxon>Eukaryota</taxon>
        <taxon>Metazoa</taxon>
        <taxon>Ecdysozoa</taxon>
        <taxon>Nematoda</taxon>
        <taxon>Chromadorea</taxon>
        <taxon>Rhabditida</taxon>
        <taxon>Rhabditina</taxon>
        <taxon>Rhabditomorpha</taxon>
        <taxon>Rhabditoidea</taxon>
        <taxon>Rhabditidae</taxon>
        <taxon>Peloderinae</taxon>
        <taxon>Caenorhabditis</taxon>
    </lineage>
</organism>
<name>NSUN1_CAEEL</name>
<keyword id="KW-0025">Alternative splicing</keyword>
<keyword id="KW-0489">Methyltransferase</keyword>
<keyword id="KW-0539">Nucleus</keyword>
<keyword id="KW-1185">Reference proteome</keyword>
<keyword id="KW-0690">Ribosome biogenesis</keyword>
<keyword id="KW-0694">RNA-binding</keyword>
<keyword id="KW-0698">rRNA processing</keyword>
<keyword id="KW-0949">S-adenosyl-L-methionine</keyword>
<keyword id="KW-0808">Transferase</keyword>
<reference evidence="7" key="1">
    <citation type="journal article" date="1998" name="Science">
        <title>Genome sequence of the nematode C. elegans: a platform for investigating biology.</title>
        <authorList>
            <consortium name="The C. elegans sequencing consortium"/>
        </authorList>
    </citation>
    <scope>NUCLEOTIDE SEQUENCE [LARGE SCALE GENOMIC DNA]</scope>
    <source>
        <strain evidence="7">Bristol N2</strain>
    </source>
</reference>
<reference evidence="5" key="2">
    <citation type="journal article" date="2020" name="Elife">
        <title>The ribosomal RNA m5C methyltransferase NSUN-1 modulates healthspan and oogenesis in Caenorhabditis elegans.</title>
        <authorList>
            <person name="Heissenberger C."/>
            <person name="Rollins J.A."/>
            <person name="Krammer T.L."/>
            <person name="Nagelreiter F."/>
            <person name="Stocker I."/>
            <person name="Wacheul L."/>
            <person name="Shpylovyi A."/>
            <person name="Tav K."/>
            <person name="Snow S."/>
            <person name="Grillari J."/>
            <person name="Rogers A.N."/>
            <person name="Lafontaine D.L."/>
            <person name="Schosserer M."/>
        </authorList>
    </citation>
    <scope>FUNCTION</scope>
    <scope>CATALYTIC ACTIVITY</scope>
    <scope>DEVELOPMENTAL STAGE</scope>
    <scope>DISRUPTION PHENOTYPE</scope>
</reference>
<reference evidence="5" key="3">
    <citation type="journal article" date="2020" name="EMBO J.">
        <title>Translational adaptation to heat stress is mediated by RNA 5-methylcytosine in Caenorhabditis elegans.</title>
        <authorList>
            <person name="Navarro I.C."/>
            <person name="Tuorto F."/>
            <person name="Jordan D."/>
            <person name="Legrand C."/>
            <person name="Price J."/>
            <person name="Braukmann F."/>
            <person name="Hendrick A.G."/>
            <person name="Akay A."/>
            <person name="Kotter A."/>
            <person name="Helm M."/>
            <person name="Lyko F."/>
            <person name="Miska E.A."/>
        </authorList>
    </citation>
    <scope>FUNCTION</scope>
    <scope>CATALYTIC ACTIVITY</scope>
    <scope>DISRUPTION PHENOTYPE</scope>
    <scope>MUTAGENESIS OF CYS-439</scope>
</reference>
<proteinExistence type="evidence at protein level"/>
<dbReference type="EC" id="2.1.1.-" evidence="1 3 4"/>
<dbReference type="EMBL" id="BX284602">
    <property type="protein sequence ID" value="CCD73642.1"/>
    <property type="molecule type" value="Genomic_DNA"/>
</dbReference>
<dbReference type="EMBL" id="BX284602">
    <property type="protein sequence ID" value="CUR29991.1"/>
    <property type="molecule type" value="Genomic_DNA"/>
</dbReference>
<dbReference type="PIR" id="D88022">
    <property type="entry name" value="D88022"/>
</dbReference>
<dbReference type="PIR" id="T33803">
    <property type="entry name" value="T33803"/>
</dbReference>
<dbReference type="RefSeq" id="NP_001303796.1">
    <molecule id="Q9TYV5-2"/>
    <property type="nucleotide sequence ID" value="NM_001316867.3"/>
</dbReference>
<dbReference type="RefSeq" id="NP_493742.1">
    <molecule id="Q9TYV5-1"/>
    <property type="nucleotide sequence ID" value="NM_061341.7"/>
</dbReference>
<dbReference type="SMR" id="Q9TYV5"/>
<dbReference type="FunCoup" id="Q9TYV5">
    <property type="interactions" value="2288"/>
</dbReference>
<dbReference type="IntAct" id="Q9TYV5">
    <property type="interactions" value="1"/>
</dbReference>
<dbReference type="STRING" id="6239.W07E6.1a.1"/>
<dbReference type="PaxDb" id="6239-W07E6.1"/>
<dbReference type="PeptideAtlas" id="Q9TYV5"/>
<dbReference type="EnsemblMetazoa" id="W07E6.1a.1">
    <molecule id="Q9TYV5-1"/>
    <property type="protein sequence ID" value="W07E6.1a.1"/>
    <property type="gene ID" value="WBGene00021073"/>
</dbReference>
<dbReference type="EnsemblMetazoa" id="W07E6.1b.1">
    <molecule id="Q9TYV5-2"/>
    <property type="protein sequence ID" value="W07E6.1b.1"/>
    <property type="gene ID" value="WBGene00021073"/>
</dbReference>
<dbReference type="GeneID" id="173437"/>
<dbReference type="KEGG" id="cel:CELE_W07E6.1"/>
<dbReference type="UCSC" id="W07E6.1">
    <molecule id="Q9TYV5-1"/>
    <property type="organism name" value="c. elegans"/>
</dbReference>
<dbReference type="AGR" id="WB:WBGene00021073"/>
<dbReference type="CTD" id="173437"/>
<dbReference type="WormBase" id="W07E6.1a">
    <molecule id="Q9TYV5-1"/>
    <property type="protein sequence ID" value="CE28259"/>
    <property type="gene ID" value="WBGene00021073"/>
    <property type="gene designation" value="nsun-1"/>
</dbReference>
<dbReference type="WormBase" id="W07E6.1b">
    <molecule id="Q9TYV5-2"/>
    <property type="protein sequence ID" value="CE51106"/>
    <property type="gene ID" value="WBGene00021073"/>
    <property type="gene designation" value="nsun-1"/>
</dbReference>
<dbReference type="eggNOG" id="KOG1122">
    <property type="taxonomic scope" value="Eukaryota"/>
</dbReference>
<dbReference type="GeneTree" id="ENSGT00940000161554"/>
<dbReference type="HOGENOM" id="CLU_005316_3_1_1"/>
<dbReference type="InParanoid" id="Q9TYV5"/>
<dbReference type="OMA" id="PIGSWTK"/>
<dbReference type="OrthoDB" id="427002at2759"/>
<dbReference type="PhylomeDB" id="Q9TYV5"/>
<dbReference type="PRO" id="PR:Q9TYV5"/>
<dbReference type="Proteomes" id="UP000001940">
    <property type="component" value="Chromosome II"/>
</dbReference>
<dbReference type="Bgee" id="WBGene00021073">
    <property type="expression patterns" value="Expressed in embryo and 4 other cell types or tissues"/>
</dbReference>
<dbReference type="ExpressionAtlas" id="Q9TYV5">
    <property type="expression patterns" value="baseline and differential"/>
</dbReference>
<dbReference type="GO" id="GO:0005730">
    <property type="term" value="C:nucleolus"/>
    <property type="evidence" value="ECO:0000318"/>
    <property type="project" value="GO_Central"/>
</dbReference>
<dbReference type="GO" id="GO:0003723">
    <property type="term" value="F:RNA binding"/>
    <property type="evidence" value="ECO:0007669"/>
    <property type="project" value="UniProtKB-KW"/>
</dbReference>
<dbReference type="GO" id="GO:0009383">
    <property type="term" value="F:rRNA (cytosine-C5-)-methyltransferase activity"/>
    <property type="evidence" value="ECO:0000314"/>
    <property type="project" value="UniProtKB"/>
</dbReference>
<dbReference type="GO" id="GO:0042335">
    <property type="term" value="P:cuticle development"/>
    <property type="evidence" value="ECO:0000315"/>
    <property type="project" value="UniProtKB"/>
</dbReference>
<dbReference type="GO" id="GO:0035262">
    <property type="term" value="P:gonad morphogenesis"/>
    <property type="evidence" value="ECO:0000315"/>
    <property type="project" value="UniProtKB"/>
</dbReference>
<dbReference type="GO" id="GO:0000470">
    <property type="term" value="P:maturation of LSU-rRNA"/>
    <property type="evidence" value="ECO:0000318"/>
    <property type="project" value="GO_Central"/>
</dbReference>
<dbReference type="GO" id="GO:1900035">
    <property type="term" value="P:negative regulation of cellular response to heat"/>
    <property type="evidence" value="ECO:0000315"/>
    <property type="project" value="UniProtKB"/>
</dbReference>
<dbReference type="GO" id="GO:0090327">
    <property type="term" value="P:negative regulation of locomotion involved in locomotory behavior"/>
    <property type="evidence" value="ECO:0000315"/>
    <property type="project" value="UniProtKB"/>
</dbReference>
<dbReference type="GO" id="GO:1901046">
    <property type="term" value="P:positive regulation of egg-laying behavior"/>
    <property type="evidence" value="ECO:0000315"/>
    <property type="project" value="UniProtKB"/>
</dbReference>
<dbReference type="GO" id="GO:1905516">
    <property type="term" value="P:positive regulation of fertilization"/>
    <property type="evidence" value="ECO:0000315"/>
    <property type="project" value="UniProtKB"/>
</dbReference>
<dbReference type="GO" id="GO:0040018">
    <property type="term" value="P:positive regulation of multicellular organism growth"/>
    <property type="evidence" value="ECO:0000315"/>
    <property type="project" value="UniProtKB"/>
</dbReference>
<dbReference type="GO" id="GO:0045727">
    <property type="term" value="P:positive regulation of translation"/>
    <property type="evidence" value="ECO:0000315"/>
    <property type="project" value="UniProtKB"/>
</dbReference>
<dbReference type="GO" id="GO:0070475">
    <property type="term" value="P:rRNA base methylation"/>
    <property type="evidence" value="ECO:0000318"/>
    <property type="project" value="GO_Central"/>
</dbReference>
<dbReference type="CDD" id="cd02440">
    <property type="entry name" value="AdoMet_MTases"/>
    <property type="match status" value="1"/>
</dbReference>
<dbReference type="FunFam" id="3.30.70.1170:FF:000001">
    <property type="entry name" value="Ribosomal RNA methyltransferase Nop2"/>
    <property type="match status" value="1"/>
</dbReference>
<dbReference type="Gene3D" id="3.30.70.1170">
    <property type="entry name" value="Sun protein, domain 3"/>
    <property type="match status" value="1"/>
</dbReference>
<dbReference type="Gene3D" id="3.40.50.150">
    <property type="entry name" value="Vaccinia Virus protein VP39"/>
    <property type="match status" value="1"/>
</dbReference>
<dbReference type="InterPro" id="IPR049560">
    <property type="entry name" value="MeTrfase_RsmB-F_NOP2_cat"/>
</dbReference>
<dbReference type="InterPro" id="IPR001678">
    <property type="entry name" value="MeTrfase_RsmB-F_NOP2_dom"/>
</dbReference>
<dbReference type="InterPro" id="IPR011023">
    <property type="entry name" value="Nop2p"/>
</dbReference>
<dbReference type="InterPro" id="IPR023267">
    <property type="entry name" value="RCMT"/>
</dbReference>
<dbReference type="InterPro" id="IPR023273">
    <property type="entry name" value="RCMT_NOP2"/>
</dbReference>
<dbReference type="InterPro" id="IPR018314">
    <property type="entry name" value="RsmB/NOL1/NOP2-like_CS"/>
</dbReference>
<dbReference type="InterPro" id="IPR029063">
    <property type="entry name" value="SAM-dependent_MTases_sf"/>
</dbReference>
<dbReference type="NCBIfam" id="TIGR00446">
    <property type="entry name" value="nop2p"/>
    <property type="match status" value="1"/>
</dbReference>
<dbReference type="PANTHER" id="PTHR22807:SF30">
    <property type="entry name" value="28S RRNA (CYTOSINE(4447)-C(5))-METHYLTRANSFERASE-RELATED"/>
    <property type="match status" value="1"/>
</dbReference>
<dbReference type="PANTHER" id="PTHR22807">
    <property type="entry name" value="NOP2 YEAST -RELATED NOL1/NOP2/FMU SUN DOMAIN-CONTAINING"/>
    <property type="match status" value="1"/>
</dbReference>
<dbReference type="Pfam" id="PF01189">
    <property type="entry name" value="Methyltr_RsmB-F"/>
    <property type="match status" value="1"/>
</dbReference>
<dbReference type="PRINTS" id="PR02008">
    <property type="entry name" value="RCMTFAMILY"/>
</dbReference>
<dbReference type="PRINTS" id="PR02012">
    <property type="entry name" value="RCMTNOP2"/>
</dbReference>
<dbReference type="SUPFAM" id="SSF53335">
    <property type="entry name" value="S-adenosyl-L-methionine-dependent methyltransferases"/>
    <property type="match status" value="1"/>
</dbReference>
<dbReference type="PROSITE" id="PS01153">
    <property type="entry name" value="NOL1_NOP2_SUN"/>
    <property type="match status" value="1"/>
</dbReference>
<dbReference type="PROSITE" id="PS51686">
    <property type="entry name" value="SAM_MT_RSMB_NOP"/>
    <property type="match status" value="1"/>
</dbReference>
<gene>
    <name evidence="8" type="primary">nsun-1</name>
    <name evidence="8" type="synonym">nol-1</name>
    <name evidence="8" type="synonym">nol-2</name>
    <name evidence="8" type="ORF">W07E6.1</name>
</gene>